<gene>
    <name evidence="7" type="primary">FAD12</name>
    <name evidence="8" type="synonym">FAD2</name>
</gene>
<keyword id="KW-0275">Fatty acid biosynthesis</keyword>
<keyword id="KW-0276">Fatty acid metabolism</keyword>
<keyword id="KW-0444">Lipid biosynthesis</keyword>
<keyword id="KW-0443">Lipid metabolism</keyword>
<keyword id="KW-0472">Membrane</keyword>
<keyword id="KW-0560">Oxidoreductase</keyword>
<keyword id="KW-0812">Transmembrane</keyword>
<keyword id="KW-1133">Transmembrane helix</keyword>
<proteinExistence type="evidence at transcript level"/>
<organism evidence="10">
    <name type="scientific">Punica granatum</name>
    <name type="common">Pomegranate</name>
    <dbReference type="NCBI Taxonomy" id="22663"/>
    <lineage>
        <taxon>Eukaryota</taxon>
        <taxon>Viridiplantae</taxon>
        <taxon>Streptophyta</taxon>
        <taxon>Embryophyta</taxon>
        <taxon>Tracheophyta</taxon>
        <taxon>Spermatophyta</taxon>
        <taxon>Magnoliopsida</taxon>
        <taxon>eudicotyledons</taxon>
        <taxon>Gunneridae</taxon>
        <taxon>Pentapetalae</taxon>
        <taxon>rosids</taxon>
        <taxon>malvids</taxon>
        <taxon>Myrtales</taxon>
        <taxon>Lythraceae</taxon>
        <taxon>Punica</taxon>
    </lineage>
</organism>
<evidence type="ECO:0000250" key="1">
    <source>
        <dbReference type="UniProtKB" id="P48631"/>
    </source>
</evidence>
<evidence type="ECO:0000255" key="2"/>
<evidence type="ECO:0000256" key="3">
    <source>
        <dbReference type="SAM" id="MobiDB-lite"/>
    </source>
</evidence>
<evidence type="ECO:0000269" key="4">
    <source>
    </source>
</evidence>
<evidence type="ECO:0000269" key="5">
    <source>
    </source>
</evidence>
<evidence type="ECO:0000269" key="6">
    <source>
    </source>
</evidence>
<evidence type="ECO:0000303" key="7">
    <source>
    </source>
</evidence>
<evidence type="ECO:0000303" key="8">
    <source>
    </source>
</evidence>
<evidence type="ECO:0000305" key="9"/>
<evidence type="ECO:0000312" key="10">
    <source>
        <dbReference type="EMBL" id="CAD24671.1"/>
    </source>
</evidence>
<sequence length="387" mass="44280">MGAGGRMTVPNKWEGEGDEKSQKPVQRVPSAKPPFTLSEIKKAIPPHCFKRSLLKSFSYVLYDLTLVAIFYYVATTYIDALPGPLRYAAWPVYWALQGCVLTGVWVIAHECGHHAFSDYQWVDDCVGLVLHSALLVPYFSWKYSHRRHHSNTGSLERDEVFVPKPKSKMPWFSKYLNNPPGRVMTLIVTLTLGWPLYLALNVSGWPYDRFACHFDPYGPIYTDRERLQIYISDVGIMAATYTLYKIAAARGLAWLVCVYGVPLLIVNAFLVTITYLQHTHPALPHYDSSEWDWLRGALATADRDYGILNKVFHNITDTHVAHHLFSTMPHYHAMEATKAIKPILGDYYQFDGTPVYKAMWREARECLYVEPDDGANSKGVFWYKKNL</sequence>
<feature type="chain" id="PRO_0000434637" description="Delta(12)-acyl-lipid-desaturase">
    <location>
        <begin position="1"/>
        <end position="387"/>
    </location>
</feature>
<feature type="transmembrane region" description="Helical" evidence="2">
    <location>
        <begin position="58"/>
        <end position="78"/>
    </location>
</feature>
<feature type="transmembrane region" description="Helical" evidence="2">
    <location>
        <begin position="88"/>
        <end position="108"/>
    </location>
</feature>
<feature type="transmembrane region" description="Helical" evidence="2">
    <location>
        <begin position="121"/>
        <end position="141"/>
    </location>
</feature>
<feature type="transmembrane region" description="Helical" evidence="2">
    <location>
        <begin position="183"/>
        <end position="203"/>
    </location>
</feature>
<feature type="transmembrane region" description="Helical" evidence="2">
    <location>
        <begin position="229"/>
        <end position="249"/>
    </location>
</feature>
<feature type="transmembrane region" description="Helical" evidence="2">
    <location>
        <begin position="251"/>
        <end position="271"/>
    </location>
</feature>
<feature type="region of interest" description="Disordered" evidence="3">
    <location>
        <begin position="1"/>
        <end position="31"/>
    </location>
</feature>
<feature type="short sequence motif" description="Histidine box-1" evidence="1">
    <location>
        <begin position="109"/>
        <end position="113"/>
    </location>
</feature>
<feature type="short sequence motif" description="Histidine box-2" evidence="1">
    <location>
        <begin position="145"/>
        <end position="149"/>
    </location>
</feature>
<feature type="short sequence motif" description="Histidine box-3" evidence="1">
    <location>
        <begin position="319"/>
        <end position="323"/>
    </location>
</feature>
<feature type="compositionally biased region" description="Basic and acidic residues" evidence="3">
    <location>
        <begin position="13"/>
        <end position="22"/>
    </location>
</feature>
<feature type="sequence conflict" description="In Ref. 2; AAO37754." evidence="9" ref="2">
    <original>W</original>
    <variation>R</variation>
    <location>
        <position position="205"/>
    </location>
</feature>
<protein>
    <recommendedName>
        <fullName evidence="7">Delta(12)-acyl-lipid-desaturase</fullName>
        <ecNumber evidence="9">1.14.19.-</ecNumber>
    </recommendedName>
    <alternativeName>
        <fullName evidence="8">Delta(12)-oleate desaturase</fullName>
        <shortName evidence="8">PgFAD2</shortName>
    </alternativeName>
</protein>
<dbReference type="EC" id="1.14.19.-" evidence="9"/>
<dbReference type="EMBL" id="AJ437139">
    <property type="protein sequence ID" value="CAD24671.1"/>
    <property type="molecule type" value="mRNA"/>
</dbReference>
<dbReference type="EMBL" id="AY178447">
    <property type="protein sequence ID" value="AAO37754.1"/>
    <property type="molecule type" value="mRNA"/>
</dbReference>
<dbReference type="SMR" id="Q84VT2"/>
<dbReference type="BRENDA" id="1.14.19.34">
    <property type="organism ID" value="14164"/>
</dbReference>
<dbReference type="UniPathway" id="UPA00658"/>
<dbReference type="Proteomes" id="UP000515151">
    <property type="component" value="Unplaced"/>
</dbReference>
<dbReference type="GO" id="GO:0016020">
    <property type="term" value="C:membrane"/>
    <property type="evidence" value="ECO:0007669"/>
    <property type="project" value="UniProtKB-SubCell"/>
</dbReference>
<dbReference type="GO" id="GO:0016717">
    <property type="term" value="F:oxidoreductase activity, acting on paired donors, with oxidation of a pair of donors resulting in the reduction of molecular oxygen to two molecules of water"/>
    <property type="evidence" value="ECO:0007669"/>
    <property type="project" value="InterPro"/>
</dbReference>
<dbReference type="GO" id="GO:0006636">
    <property type="term" value="P:unsaturated fatty acid biosynthetic process"/>
    <property type="evidence" value="ECO:0007669"/>
    <property type="project" value="UniProtKB-UniPathway"/>
</dbReference>
<dbReference type="CDD" id="cd03507">
    <property type="entry name" value="Delta12-FADS-like"/>
    <property type="match status" value="1"/>
</dbReference>
<dbReference type="InterPro" id="IPR005804">
    <property type="entry name" value="FA_desaturase_dom"/>
</dbReference>
<dbReference type="InterPro" id="IPR021863">
    <property type="entry name" value="FAS_N"/>
</dbReference>
<dbReference type="InterPro" id="IPR012171">
    <property type="entry name" value="Fatty_acid_desaturase"/>
</dbReference>
<dbReference type="PANTHER" id="PTHR32100">
    <property type="entry name" value="OMEGA-6 FATTY ACID DESATURASE, CHLOROPLASTIC"/>
    <property type="match status" value="1"/>
</dbReference>
<dbReference type="Pfam" id="PF11960">
    <property type="entry name" value="DUF3474"/>
    <property type="match status" value="1"/>
</dbReference>
<dbReference type="Pfam" id="PF00487">
    <property type="entry name" value="FA_desaturase"/>
    <property type="match status" value="1"/>
</dbReference>
<comment type="function">
    <text evidence="4 5 6">Delta(12)-fatty acid desaturase producing in a heterologous system linoleic acid (18:2(9Z,12Z)) and to a lower extent hexadecadienoic acid (16:2(9Z,12Z)).</text>
</comment>
<comment type="pathway">
    <text>Lipid metabolism; polyunsaturated fatty acid biosynthesis.</text>
</comment>
<comment type="subcellular location">
    <subcellularLocation>
        <location evidence="2">Membrane</location>
        <topology evidence="2">Multi-pass membrane protein</topology>
    </subcellularLocation>
</comment>
<comment type="domain">
    <text evidence="9">The histidine box domains may contain the active site and/or be involved in metal ion binding.</text>
</comment>
<comment type="similarity">
    <text evidence="9">Belongs to the fatty acid desaturase type 1 family.</text>
</comment>
<reference key="1">
    <citation type="journal article" date="2002" name="Eur. J. Biochem.">
        <title>Formation of conjugated Delta11Delta13-double bonds by Delta12-linoleic acid (1,4)-acyl-lipid-desaturase in pomegranate seeds.</title>
        <authorList>
            <person name="Hornung E."/>
            <person name="Pernstich C."/>
            <person name="Feussner I."/>
        </authorList>
    </citation>
    <scope>NUCLEOTIDE SEQUENCE [MRNA]</scope>
    <scope>FUNCTION</scope>
</reference>
<reference key="2">
    <citation type="journal article" date="2003" name="J. Biol. Chem.">
        <title>Delta 12-oleate desaturase-related enzymes associated with formation of conjugated trans-delta 11, cis-delta 13 double bonds.</title>
        <authorList>
            <person name="Iwabuchi M."/>
            <person name="Kohno-Murase J."/>
            <person name="Imamura J."/>
        </authorList>
    </citation>
    <scope>NUCLEOTIDE SEQUENCE [MRNA]</scope>
    <scope>FUNCTION</scope>
</reference>
<reference key="3">
    <citation type="journal article" date="2014" name="Planta">
        <title>Combined transgenic expression of Punica granatum conjugase (FADX) and FAD2 desaturase in high linoleic acid Arabidopsis thaliana mutant leads to increased accumulation of punicic acid.</title>
        <authorList>
            <person name="Mietkiewska E."/>
            <person name="Miles R."/>
            <person name="Wickramarathna A."/>
            <person name="Sahibollah A.F."/>
            <person name="Greer M.S."/>
            <person name="Chen G."/>
            <person name="Weselake R.J."/>
        </authorList>
    </citation>
    <scope>FUNCTION</scope>
</reference>
<accession>Q84VT2</accession>
<accession>Q84UB7</accession>
<name>FAD12_PUNGR</name>